<name>ACCA_PICP2</name>
<accession>B1XK66</accession>
<organism>
    <name type="scientific">Picosynechococcus sp. (strain ATCC 27264 / PCC 7002 / PR-6)</name>
    <name type="common">Agmenellum quadruplicatum</name>
    <dbReference type="NCBI Taxonomy" id="32049"/>
    <lineage>
        <taxon>Bacteria</taxon>
        <taxon>Bacillati</taxon>
        <taxon>Cyanobacteriota</taxon>
        <taxon>Cyanophyceae</taxon>
        <taxon>Oscillatoriophycideae</taxon>
        <taxon>Chroococcales</taxon>
        <taxon>Geminocystaceae</taxon>
        <taxon>Picosynechococcus</taxon>
    </lineage>
</organism>
<evidence type="ECO:0000255" key="1">
    <source>
        <dbReference type="HAMAP-Rule" id="MF_00823"/>
    </source>
</evidence>
<evidence type="ECO:0000255" key="2">
    <source>
        <dbReference type="PROSITE-ProRule" id="PRU01137"/>
    </source>
</evidence>
<sequence>MPKTERRTFLLDFEKPLSELESRIHQIRDLAAENNVDVSEQIQQLEARADQLREEIFSTLTPAQRLQLARHPRRPSTLDYVQMMADEWFELHGDRGGSDDPALIGGVARFDGQPVMMLGHQKGRDTKDNVARNFGMPAPGGYRKAMRLMDHANRFGMPILTFIDTPGAWAGLEAEKLGQGEAIAFNLREMFSLDVPIICTVIGEGGSGGALGIGVGDRVLMLKNSVYTVATPEACAAILWKDAGKSEQAAAALKITAEDLKSLEIIDEIVPEPASCAHADPIGAAQLLKAAIQDNLQALLKLTPERRRELRYQRFRKIGVFLESS</sequence>
<comment type="function">
    <text evidence="1">Component of the acetyl coenzyme A carboxylase (ACC) complex. First, biotin carboxylase catalyzes the carboxylation of biotin on its carrier protein (BCCP) and then the CO(2) group is transferred by the carboxyltransferase to acetyl-CoA to form malonyl-CoA.</text>
</comment>
<comment type="catalytic activity">
    <reaction evidence="1">
        <text>N(6)-carboxybiotinyl-L-lysyl-[protein] + acetyl-CoA = N(6)-biotinyl-L-lysyl-[protein] + malonyl-CoA</text>
        <dbReference type="Rhea" id="RHEA:54728"/>
        <dbReference type="Rhea" id="RHEA-COMP:10505"/>
        <dbReference type="Rhea" id="RHEA-COMP:10506"/>
        <dbReference type="ChEBI" id="CHEBI:57288"/>
        <dbReference type="ChEBI" id="CHEBI:57384"/>
        <dbReference type="ChEBI" id="CHEBI:83144"/>
        <dbReference type="ChEBI" id="CHEBI:83145"/>
        <dbReference type="EC" id="2.1.3.15"/>
    </reaction>
</comment>
<comment type="pathway">
    <text evidence="1">Lipid metabolism; malonyl-CoA biosynthesis; malonyl-CoA from acetyl-CoA: step 1/1.</text>
</comment>
<comment type="subunit">
    <text evidence="1">Acetyl-CoA carboxylase is a heterohexamer composed of biotin carboxyl carrier protein (AccB), biotin carboxylase (AccC) and two subunits each of ACCase subunit alpha (AccA) and ACCase subunit beta (AccD).</text>
</comment>
<comment type="subcellular location">
    <subcellularLocation>
        <location evidence="1">Cytoplasm</location>
    </subcellularLocation>
</comment>
<comment type="similarity">
    <text evidence="1">Belongs to the AccA family.</text>
</comment>
<reference key="1">
    <citation type="submission" date="2008-02" db="EMBL/GenBank/DDBJ databases">
        <title>Complete sequence of Synechococcus sp. PCC 7002.</title>
        <authorList>
            <person name="Li T."/>
            <person name="Zhao J."/>
            <person name="Zhao C."/>
            <person name="Liu Z."/>
            <person name="Zhao F."/>
            <person name="Marquardt J."/>
            <person name="Nomura C.T."/>
            <person name="Persson S."/>
            <person name="Detter J.C."/>
            <person name="Richardson P.M."/>
            <person name="Lanz C."/>
            <person name="Schuster S.C."/>
            <person name="Wang J."/>
            <person name="Li S."/>
            <person name="Huang X."/>
            <person name="Cai T."/>
            <person name="Yu Z."/>
            <person name="Luo J."/>
            <person name="Zhao J."/>
            <person name="Bryant D.A."/>
        </authorList>
    </citation>
    <scope>NUCLEOTIDE SEQUENCE [LARGE SCALE GENOMIC DNA]</scope>
    <source>
        <strain>ATCC 27264 / PCC 7002 / PR-6</strain>
    </source>
</reference>
<gene>
    <name evidence="1" type="primary">accA</name>
    <name type="ordered locus">SYNPCC7002_A2443</name>
</gene>
<feature type="chain" id="PRO_1000134531" description="Acetyl-coenzyme A carboxylase carboxyl transferase subunit alpha">
    <location>
        <begin position="1"/>
        <end position="325"/>
    </location>
</feature>
<feature type="domain" description="CoA carboxyltransferase C-terminal" evidence="2">
    <location>
        <begin position="44"/>
        <end position="298"/>
    </location>
</feature>
<proteinExistence type="inferred from homology"/>
<protein>
    <recommendedName>
        <fullName evidence="1">Acetyl-coenzyme A carboxylase carboxyl transferase subunit alpha</fullName>
        <shortName evidence="1">ACCase subunit alpha</shortName>
        <shortName evidence="1">Acetyl-CoA carboxylase carboxyltransferase subunit alpha</shortName>
        <ecNumber evidence="1">2.1.3.15</ecNumber>
    </recommendedName>
</protein>
<keyword id="KW-0067">ATP-binding</keyword>
<keyword id="KW-0963">Cytoplasm</keyword>
<keyword id="KW-0275">Fatty acid biosynthesis</keyword>
<keyword id="KW-0276">Fatty acid metabolism</keyword>
<keyword id="KW-0444">Lipid biosynthesis</keyword>
<keyword id="KW-0443">Lipid metabolism</keyword>
<keyword id="KW-0547">Nucleotide-binding</keyword>
<keyword id="KW-1185">Reference proteome</keyword>
<keyword id="KW-0808">Transferase</keyword>
<dbReference type="EC" id="2.1.3.15" evidence="1"/>
<dbReference type="EMBL" id="CP000951">
    <property type="protein sequence ID" value="ACB00421.1"/>
    <property type="molecule type" value="Genomic_DNA"/>
</dbReference>
<dbReference type="RefSeq" id="WP_012308039.1">
    <property type="nucleotide sequence ID" value="NZ_JAHHPU010000003.1"/>
</dbReference>
<dbReference type="SMR" id="B1XK66"/>
<dbReference type="STRING" id="32049.SYNPCC7002_A2443"/>
<dbReference type="KEGG" id="syp:SYNPCC7002_A2443"/>
<dbReference type="eggNOG" id="COG0825">
    <property type="taxonomic scope" value="Bacteria"/>
</dbReference>
<dbReference type="HOGENOM" id="CLU_015486_0_2_3"/>
<dbReference type="UniPathway" id="UPA00655">
    <property type="reaction ID" value="UER00711"/>
</dbReference>
<dbReference type="Proteomes" id="UP000001688">
    <property type="component" value="Chromosome"/>
</dbReference>
<dbReference type="GO" id="GO:0009317">
    <property type="term" value="C:acetyl-CoA carboxylase complex"/>
    <property type="evidence" value="ECO:0007669"/>
    <property type="project" value="InterPro"/>
</dbReference>
<dbReference type="GO" id="GO:0003989">
    <property type="term" value="F:acetyl-CoA carboxylase activity"/>
    <property type="evidence" value="ECO:0007669"/>
    <property type="project" value="InterPro"/>
</dbReference>
<dbReference type="GO" id="GO:0005524">
    <property type="term" value="F:ATP binding"/>
    <property type="evidence" value="ECO:0007669"/>
    <property type="project" value="UniProtKB-KW"/>
</dbReference>
<dbReference type="GO" id="GO:0016743">
    <property type="term" value="F:carboxyl- or carbamoyltransferase activity"/>
    <property type="evidence" value="ECO:0007669"/>
    <property type="project" value="UniProtKB-UniRule"/>
</dbReference>
<dbReference type="GO" id="GO:0006633">
    <property type="term" value="P:fatty acid biosynthetic process"/>
    <property type="evidence" value="ECO:0007669"/>
    <property type="project" value="UniProtKB-KW"/>
</dbReference>
<dbReference type="GO" id="GO:2001295">
    <property type="term" value="P:malonyl-CoA biosynthetic process"/>
    <property type="evidence" value="ECO:0007669"/>
    <property type="project" value="UniProtKB-UniRule"/>
</dbReference>
<dbReference type="Gene3D" id="3.90.226.10">
    <property type="entry name" value="2-enoyl-CoA Hydratase, Chain A, domain 1"/>
    <property type="match status" value="1"/>
</dbReference>
<dbReference type="HAMAP" id="MF_00823">
    <property type="entry name" value="AcetylCoA_CT_alpha"/>
    <property type="match status" value="1"/>
</dbReference>
<dbReference type="InterPro" id="IPR001095">
    <property type="entry name" value="Acetyl_CoA_COase_a_su"/>
</dbReference>
<dbReference type="InterPro" id="IPR029045">
    <property type="entry name" value="ClpP/crotonase-like_dom_sf"/>
</dbReference>
<dbReference type="InterPro" id="IPR011763">
    <property type="entry name" value="COA_CT_C"/>
</dbReference>
<dbReference type="NCBIfam" id="TIGR00513">
    <property type="entry name" value="accA"/>
    <property type="match status" value="1"/>
</dbReference>
<dbReference type="NCBIfam" id="NF041504">
    <property type="entry name" value="AccA_sub"/>
    <property type="match status" value="1"/>
</dbReference>
<dbReference type="NCBIfam" id="NF004344">
    <property type="entry name" value="PRK05724.1"/>
    <property type="match status" value="1"/>
</dbReference>
<dbReference type="PANTHER" id="PTHR42853">
    <property type="entry name" value="ACETYL-COENZYME A CARBOXYLASE CARBOXYL TRANSFERASE SUBUNIT ALPHA"/>
    <property type="match status" value="1"/>
</dbReference>
<dbReference type="PANTHER" id="PTHR42853:SF3">
    <property type="entry name" value="ACETYL-COENZYME A CARBOXYLASE CARBOXYL TRANSFERASE SUBUNIT ALPHA, CHLOROPLASTIC"/>
    <property type="match status" value="1"/>
</dbReference>
<dbReference type="Pfam" id="PF03255">
    <property type="entry name" value="ACCA"/>
    <property type="match status" value="1"/>
</dbReference>
<dbReference type="PRINTS" id="PR01069">
    <property type="entry name" value="ACCCTRFRASEA"/>
</dbReference>
<dbReference type="SUPFAM" id="SSF52096">
    <property type="entry name" value="ClpP/crotonase"/>
    <property type="match status" value="1"/>
</dbReference>
<dbReference type="PROSITE" id="PS50989">
    <property type="entry name" value="COA_CT_CTER"/>
    <property type="match status" value="1"/>
</dbReference>